<gene>
    <name type="primary">gmk</name>
    <name type="ordered locus">Cj1177</name>
</gene>
<dbReference type="EC" id="2.7.4.8"/>
<dbReference type="EMBL" id="AL111168">
    <property type="protein sequence ID" value="CAL35292.1"/>
    <property type="molecule type" value="Genomic_DNA"/>
</dbReference>
<dbReference type="EMBL" id="AJ000744">
    <property type="protein sequence ID" value="CAA04292.1"/>
    <property type="molecule type" value="Genomic_DNA"/>
</dbReference>
<dbReference type="PIR" id="C81323">
    <property type="entry name" value="C81323"/>
</dbReference>
<dbReference type="RefSeq" id="WP_002860253.1">
    <property type="nucleotide sequence ID" value="NZ_SZUC01000001.1"/>
</dbReference>
<dbReference type="RefSeq" id="YP_002344568.1">
    <property type="nucleotide sequence ID" value="NC_002163.1"/>
</dbReference>
<dbReference type="SMR" id="Q9PNB8"/>
<dbReference type="IntAct" id="Q9PNB8">
    <property type="interactions" value="50"/>
</dbReference>
<dbReference type="STRING" id="192222.Cj1177c"/>
<dbReference type="PaxDb" id="192222-Cj1177c"/>
<dbReference type="EnsemblBacteria" id="CAL35292">
    <property type="protein sequence ID" value="CAL35292"/>
    <property type="gene ID" value="Cj1177c"/>
</dbReference>
<dbReference type="GeneID" id="905467"/>
<dbReference type="KEGG" id="cje:Cj1177c"/>
<dbReference type="PATRIC" id="fig|192222.6.peg.1158"/>
<dbReference type="eggNOG" id="COG0194">
    <property type="taxonomic scope" value="Bacteria"/>
</dbReference>
<dbReference type="HOGENOM" id="CLU_001715_1_2_7"/>
<dbReference type="OrthoDB" id="9808150at2"/>
<dbReference type="Proteomes" id="UP000000799">
    <property type="component" value="Chromosome"/>
</dbReference>
<dbReference type="GO" id="GO:0005829">
    <property type="term" value="C:cytosol"/>
    <property type="evidence" value="ECO:0007669"/>
    <property type="project" value="TreeGrafter"/>
</dbReference>
<dbReference type="GO" id="GO:0005524">
    <property type="term" value="F:ATP binding"/>
    <property type="evidence" value="ECO:0007669"/>
    <property type="project" value="UniProtKB-UniRule"/>
</dbReference>
<dbReference type="GO" id="GO:0004385">
    <property type="term" value="F:guanylate kinase activity"/>
    <property type="evidence" value="ECO:0007669"/>
    <property type="project" value="UniProtKB-UniRule"/>
</dbReference>
<dbReference type="CDD" id="cd00071">
    <property type="entry name" value="GMPK"/>
    <property type="match status" value="1"/>
</dbReference>
<dbReference type="FunFam" id="3.30.63.10:FF:000002">
    <property type="entry name" value="Guanylate kinase 1"/>
    <property type="match status" value="1"/>
</dbReference>
<dbReference type="Gene3D" id="3.30.63.10">
    <property type="entry name" value="Guanylate Kinase phosphate binding domain"/>
    <property type="match status" value="1"/>
</dbReference>
<dbReference type="Gene3D" id="3.40.50.300">
    <property type="entry name" value="P-loop containing nucleotide triphosphate hydrolases"/>
    <property type="match status" value="1"/>
</dbReference>
<dbReference type="HAMAP" id="MF_00328">
    <property type="entry name" value="Guanylate_kinase"/>
    <property type="match status" value="1"/>
</dbReference>
<dbReference type="InterPro" id="IPR008145">
    <property type="entry name" value="GK/Ca_channel_bsu"/>
</dbReference>
<dbReference type="InterPro" id="IPR008144">
    <property type="entry name" value="Guanylate_kin-like_dom"/>
</dbReference>
<dbReference type="InterPro" id="IPR017665">
    <property type="entry name" value="Guanylate_kinase"/>
</dbReference>
<dbReference type="InterPro" id="IPR020590">
    <property type="entry name" value="Guanylate_kinase_CS"/>
</dbReference>
<dbReference type="InterPro" id="IPR027417">
    <property type="entry name" value="P-loop_NTPase"/>
</dbReference>
<dbReference type="NCBIfam" id="TIGR03263">
    <property type="entry name" value="guanyl_kin"/>
    <property type="match status" value="1"/>
</dbReference>
<dbReference type="PANTHER" id="PTHR23117:SF13">
    <property type="entry name" value="GUANYLATE KINASE"/>
    <property type="match status" value="1"/>
</dbReference>
<dbReference type="PANTHER" id="PTHR23117">
    <property type="entry name" value="GUANYLATE KINASE-RELATED"/>
    <property type="match status" value="1"/>
</dbReference>
<dbReference type="Pfam" id="PF00625">
    <property type="entry name" value="Guanylate_kin"/>
    <property type="match status" value="1"/>
</dbReference>
<dbReference type="SMART" id="SM00072">
    <property type="entry name" value="GuKc"/>
    <property type="match status" value="1"/>
</dbReference>
<dbReference type="SUPFAM" id="SSF52540">
    <property type="entry name" value="P-loop containing nucleoside triphosphate hydrolases"/>
    <property type="match status" value="1"/>
</dbReference>
<dbReference type="PROSITE" id="PS00856">
    <property type="entry name" value="GUANYLATE_KINASE_1"/>
    <property type="match status" value="1"/>
</dbReference>
<dbReference type="PROSITE" id="PS50052">
    <property type="entry name" value="GUANYLATE_KINASE_2"/>
    <property type="match status" value="1"/>
</dbReference>
<comment type="function">
    <text evidence="1">Essential for recycling GMP and indirectly, cGMP.</text>
</comment>
<comment type="catalytic activity">
    <reaction>
        <text>GMP + ATP = GDP + ADP</text>
        <dbReference type="Rhea" id="RHEA:20780"/>
        <dbReference type="ChEBI" id="CHEBI:30616"/>
        <dbReference type="ChEBI" id="CHEBI:58115"/>
        <dbReference type="ChEBI" id="CHEBI:58189"/>
        <dbReference type="ChEBI" id="CHEBI:456216"/>
        <dbReference type="EC" id="2.7.4.8"/>
    </reaction>
</comment>
<comment type="subcellular location">
    <subcellularLocation>
        <location evidence="1">Cytoplasm</location>
    </subcellularLocation>
</comment>
<comment type="similarity">
    <text evidence="2">Belongs to the guanylate kinase family.</text>
</comment>
<protein>
    <recommendedName>
        <fullName>Guanylate kinase</fullName>
        <ecNumber>2.7.4.8</ecNumber>
    </recommendedName>
    <alternativeName>
        <fullName>GMP kinase</fullName>
    </alternativeName>
</protein>
<feature type="chain" id="PRO_0000170515" description="Guanylate kinase">
    <location>
        <begin position="1"/>
        <end position="207"/>
    </location>
</feature>
<feature type="domain" description="Guanylate kinase-like">
    <location>
        <begin position="5"/>
        <end position="185"/>
    </location>
</feature>
<feature type="binding site" evidence="1">
    <location>
        <begin position="12"/>
        <end position="19"/>
    </location>
    <ligand>
        <name>ATP</name>
        <dbReference type="ChEBI" id="CHEBI:30616"/>
    </ligand>
</feature>
<feature type="sequence conflict" description="In Ref. 2; CAA04292." evidence="2" ref="2">
    <original>F</original>
    <variation>V</variation>
    <location>
        <position position="81"/>
    </location>
</feature>
<evidence type="ECO:0000250" key="1"/>
<evidence type="ECO:0000305" key="2"/>
<keyword id="KW-0067">ATP-binding</keyword>
<keyword id="KW-0963">Cytoplasm</keyword>
<keyword id="KW-0418">Kinase</keyword>
<keyword id="KW-0547">Nucleotide-binding</keyword>
<keyword id="KW-1185">Reference proteome</keyword>
<keyword id="KW-0808">Transferase</keyword>
<reference key="1">
    <citation type="journal article" date="2000" name="Nature">
        <title>The genome sequence of the food-borne pathogen Campylobacter jejuni reveals hypervariable sequences.</title>
        <authorList>
            <person name="Parkhill J."/>
            <person name="Wren B.W."/>
            <person name="Mungall K.L."/>
            <person name="Ketley J.M."/>
            <person name="Churcher C.M."/>
            <person name="Basham D."/>
            <person name="Chillingworth T."/>
            <person name="Davies R.M."/>
            <person name="Feltwell T."/>
            <person name="Holroyd S."/>
            <person name="Jagels K."/>
            <person name="Karlyshev A.V."/>
            <person name="Moule S."/>
            <person name="Pallen M.J."/>
            <person name="Penn C.W."/>
            <person name="Quail M.A."/>
            <person name="Rajandream M.A."/>
            <person name="Rutherford K.M."/>
            <person name="van Vliet A.H.M."/>
            <person name="Whitehead S."/>
            <person name="Barrell B.G."/>
        </authorList>
    </citation>
    <scope>NUCLEOTIDE SEQUENCE [LARGE SCALE GENOMIC DNA]</scope>
    <source>
        <strain>ATCC 700819 / NCTC 11168</strain>
    </source>
</reference>
<reference key="2">
    <citation type="submission" date="1997-09" db="EMBL/GenBank/DDBJ databases">
        <authorList>
            <person name="Karlyshev A.V."/>
            <person name="Wren B.W."/>
        </authorList>
    </citation>
    <scope>NUCLEOTIDE SEQUENCE [GENOMIC DNA] OF 27-126</scope>
    <source>
        <strain>ATCC 700819 / NCTC 11168</strain>
    </source>
</reference>
<proteinExistence type="inferred from homology"/>
<accession>Q9PNB8</accession>
<accession>O32356</accession>
<accession>Q0P979</accession>
<organism>
    <name type="scientific">Campylobacter jejuni subsp. jejuni serotype O:2 (strain ATCC 700819 / NCTC 11168)</name>
    <dbReference type="NCBI Taxonomy" id="192222"/>
    <lineage>
        <taxon>Bacteria</taxon>
        <taxon>Pseudomonadati</taxon>
        <taxon>Campylobacterota</taxon>
        <taxon>Epsilonproteobacteria</taxon>
        <taxon>Campylobacterales</taxon>
        <taxon>Campylobacteraceae</taxon>
        <taxon>Campylobacter</taxon>
    </lineage>
</organism>
<sequence length="207" mass="24025">MKLQGFVLLISGPSGAGKSTLLKKLFDEFEDELYFSISSTTRKPREGEKNGIHYHFISHEEFQKGIDSDHFLEWARVHENFYGTSLKHTQNALDNGKIVVFDIDVQGFKIARKKMADKIVSVFITTKNKDELKKRLIKRNTDTIIQLEKRLQNASDEMKELSEYDYLIINDELKQSYEALRAILIAHKFRTKGQNLGQIQNIWNEGE</sequence>
<name>KGUA_CAMJE</name>